<name>TIP42_MAIZE</name>
<dbReference type="EMBL" id="AF326506">
    <property type="protein sequence ID" value="AAK26773.1"/>
    <property type="molecule type" value="mRNA"/>
</dbReference>
<dbReference type="RefSeq" id="NP_001105034.1">
    <property type="nucleotide sequence ID" value="NM_001111564.1"/>
</dbReference>
<dbReference type="SMR" id="Q9ATL5"/>
<dbReference type="FunCoup" id="Q9ATL5">
    <property type="interactions" value="782"/>
</dbReference>
<dbReference type="STRING" id="4577.Q9ATL5"/>
<dbReference type="PaxDb" id="4577-GRMZM2G108273_P01"/>
<dbReference type="GeneID" id="103635714"/>
<dbReference type="KEGG" id="zma:103635714"/>
<dbReference type="eggNOG" id="KOG0223">
    <property type="taxonomic scope" value="Eukaryota"/>
</dbReference>
<dbReference type="InParanoid" id="Q9ATL5"/>
<dbReference type="OrthoDB" id="3222at2759"/>
<dbReference type="Proteomes" id="UP000007305">
    <property type="component" value="Unplaced"/>
</dbReference>
<dbReference type="ExpressionAtlas" id="Q9ATL5">
    <property type="expression patterns" value="baseline and differential"/>
</dbReference>
<dbReference type="GO" id="GO:0016020">
    <property type="term" value="C:membrane"/>
    <property type="evidence" value="ECO:0000318"/>
    <property type="project" value="GO_Central"/>
</dbReference>
<dbReference type="GO" id="GO:0005774">
    <property type="term" value="C:vacuolar membrane"/>
    <property type="evidence" value="ECO:0007669"/>
    <property type="project" value="UniProtKB-SubCell"/>
</dbReference>
<dbReference type="GO" id="GO:0015250">
    <property type="term" value="F:water channel activity"/>
    <property type="evidence" value="ECO:0000318"/>
    <property type="project" value="GO_Central"/>
</dbReference>
<dbReference type="GO" id="GO:0006833">
    <property type="term" value="P:water transport"/>
    <property type="evidence" value="ECO:0000318"/>
    <property type="project" value="GO_Central"/>
</dbReference>
<dbReference type="FunFam" id="1.20.1080.10:FF:000002">
    <property type="entry name" value="Probable aquaporin TIP1-1"/>
    <property type="match status" value="1"/>
</dbReference>
<dbReference type="Gene3D" id="1.20.1080.10">
    <property type="entry name" value="Glycerol uptake facilitator protein"/>
    <property type="match status" value="1"/>
</dbReference>
<dbReference type="InterPro" id="IPR023271">
    <property type="entry name" value="Aquaporin-like"/>
</dbReference>
<dbReference type="InterPro" id="IPR034294">
    <property type="entry name" value="Aquaporin_transptr"/>
</dbReference>
<dbReference type="InterPro" id="IPR000425">
    <property type="entry name" value="MIP"/>
</dbReference>
<dbReference type="InterPro" id="IPR022357">
    <property type="entry name" value="MIP_CS"/>
</dbReference>
<dbReference type="PANTHER" id="PTHR45665:SF13">
    <property type="entry name" value="AQUAPORIN TIP4-1-RELATED"/>
    <property type="match status" value="1"/>
</dbReference>
<dbReference type="PANTHER" id="PTHR45665">
    <property type="entry name" value="AQUAPORIN-8"/>
    <property type="match status" value="1"/>
</dbReference>
<dbReference type="Pfam" id="PF00230">
    <property type="entry name" value="MIP"/>
    <property type="match status" value="1"/>
</dbReference>
<dbReference type="PRINTS" id="PR00783">
    <property type="entry name" value="MINTRINSICP"/>
</dbReference>
<dbReference type="SUPFAM" id="SSF81338">
    <property type="entry name" value="Aquaporin-like"/>
    <property type="match status" value="1"/>
</dbReference>
<dbReference type="PROSITE" id="PS00221">
    <property type="entry name" value="MIP"/>
    <property type="match status" value="1"/>
</dbReference>
<proteinExistence type="evidence at transcript level"/>
<accession>Q9ATL5</accession>
<feature type="chain" id="PRO_0000286009" description="Aquaporin TIP4-2">
    <location>
        <begin position="1"/>
        <end position="257"/>
    </location>
</feature>
<feature type="transmembrane region" description="Helical; Name=1" evidence="2">
    <location>
        <begin position="32"/>
        <end position="52"/>
    </location>
</feature>
<feature type="transmembrane region" description="Helical; Name=2" evidence="2">
    <location>
        <begin position="63"/>
        <end position="83"/>
    </location>
</feature>
<feature type="transmembrane region" description="Helical; Name=3" evidence="2">
    <location>
        <begin position="107"/>
        <end position="127"/>
    </location>
</feature>
<feature type="transmembrane region" description="Helical; Name=4" evidence="2">
    <location>
        <begin position="150"/>
        <end position="170"/>
    </location>
</feature>
<feature type="transmembrane region" description="Helical; Name=5" evidence="2">
    <location>
        <begin position="178"/>
        <end position="198"/>
    </location>
</feature>
<feature type="transmembrane region" description="Helical; Name=6" evidence="2">
    <location>
        <begin position="225"/>
        <end position="245"/>
    </location>
</feature>
<feature type="short sequence motif" description="NPA 1" evidence="1">
    <location>
        <begin position="91"/>
        <end position="93"/>
    </location>
</feature>
<feature type="short sequence motif" description="NPA 2" evidence="1">
    <location>
        <begin position="204"/>
        <end position="206"/>
    </location>
</feature>
<sequence length="257" mass="26603">MAKLVNKLVDSFDHDEAPAPDVGCVRAVLAELVLTFLFVFTGVSASMAAGAGGKPGEAMPMATLAAVAIAHALAAGVLVTAGFHVSGGHLNPAVTVGILVRGHITKLRALLYVAAQLLASSLACILLRYLSGGMVTPVHALGAGIRPMQGLVMEVILTFSLLFVTYAMILDPRSQVRTIGPLLTGLIVGANSLAGGNFTGASMNPARSFGPAMATGVWTNHWVYWIGPLLGGSLAGFVYESLFMVNKTHEPLLNGDI</sequence>
<reference key="1">
    <citation type="journal article" date="2001" name="Plant Physiol.">
        <title>Aquaporins constitute a large and highly divergent protein family in maize.</title>
        <authorList>
            <person name="Chaumont F."/>
            <person name="Barrieu F."/>
            <person name="Wojcik E."/>
            <person name="Chrispeels M.J."/>
            <person name="Jung R."/>
        </authorList>
    </citation>
    <scope>NUCLEOTIDE SEQUENCE [MRNA]</scope>
    <scope>GENE FAMILY</scope>
    <scope>NOMENCLATURE</scope>
    <source>
        <strain>cv. B73</strain>
    </source>
</reference>
<gene>
    <name type="primary">TIP4-2</name>
</gene>
<comment type="function">
    <text evidence="1">Aquaporins facilitate the transport of water and small neutral solutes across cell membranes.</text>
</comment>
<comment type="subcellular location">
    <subcellularLocation>
        <location evidence="1">Vacuole membrane</location>
        <topology evidence="1">Multi-pass membrane protein</topology>
    </subcellularLocation>
    <text>Tonoplast.</text>
</comment>
<comment type="domain">
    <text>Aquaporins contain two tandem repeats each containing three membrane-spanning domains and a pore-forming loop with the signature motif Asn-Pro-Ala (NPA).</text>
</comment>
<comment type="similarity">
    <text evidence="3">Belongs to the MIP/aquaporin (TC 1.A.8) family. TIP (TC 1.A.8.10) subfamily.</text>
</comment>
<keyword id="KW-0472">Membrane</keyword>
<keyword id="KW-1185">Reference proteome</keyword>
<keyword id="KW-0677">Repeat</keyword>
<keyword id="KW-0812">Transmembrane</keyword>
<keyword id="KW-1133">Transmembrane helix</keyword>
<keyword id="KW-0813">Transport</keyword>
<keyword id="KW-0926">Vacuole</keyword>
<organism>
    <name type="scientific">Zea mays</name>
    <name type="common">Maize</name>
    <dbReference type="NCBI Taxonomy" id="4577"/>
    <lineage>
        <taxon>Eukaryota</taxon>
        <taxon>Viridiplantae</taxon>
        <taxon>Streptophyta</taxon>
        <taxon>Embryophyta</taxon>
        <taxon>Tracheophyta</taxon>
        <taxon>Spermatophyta</taxon>
        <taxon>Magnoliopsida</taxon>
        <taxon>Liliopsida</taxon>
        <taxon>Poales</taxon>
        <taxon>Poaceae</taxon>
        <taxon>PACMAD clade</taxon>
        <taxon>Panicoideae</taxon>
        <taxon>Andropogonodae</taxon>
        <taxon>Andropogoneae</taxon>
        <taxon>Tripsacinae</taxon>
        <taxon>Zea</taxon>
    </lineage>
</organism>
<evidence type="ECO:0000250" key="1"/>
<evidence type="ECO:0000255" key="2"/>
<evidence type="ECO:0000305" key="3"/>
<protein>
    <recommendedName>
        <fullName>Aquaporin TIP4-2</fullName>
    </recommendedName>
    <alternativeName>
        <fullName>Tonoplast intrinsic protein 4-2</fullName>
    </alternativeName>
    <alternativeName>
        <fullName>ZmTIP4-2</fullName>
    </alternativeName>
    <alternativeName>
        <fullName>ZmTIP4;2</fullName>
    </alternativeName>
</protein>